<protein>
    <recommendedName>
        <fullName evidence="1">Erythronate-4-phosphate dehydrogenase</fullName>
        <ecNumber evidence="1">1.1.1.290</ecNumber>
    </recommendedName>
</protein>
<proteinExistence type="inferred from homology"/>
<accession>Q6D2N5</accession>
<evidence type="ECO:0000255" key="1">
    <source>
        <dbReference type="HAMAP-Rule" id="MF_01825"/>
    </source>
</evidence>
<gene>
    <name evidence="1" type="primary">pdxB</name>
    <name type="ordered locus">ECA3060</name>
</gene>
<dbReference type="EC" id="1.1.1.290" evidence="1"/>
<dbReference type="EMBL" id="BX950851">
    <property type="protein sequence ID" value="CAG75959.1"/>
    <property type="molecule type" value="Genomic_DNA"/>
</dbReference>
<dbReference type="RefSeq" id="WP_011094584.1">
    <property type="nucleotide sequence ID" value="NC_004547.2"/>
</dbReference>
<dbReference type="SMR" id="Q6D2N5"/>
<dbReference type="STRING" id="218491.ECA3060"/>
<dbReference type="KEGG" id="eca:ECA3060"/>
<dbReference type="PATRIC" id="fig|218491.5.peg.3093"/>
<dbReference type="eggNOG" id="COG0111">
    <property type="taxonomic scope" value="Bacteria"/>
</dbReference>
<dbReference type="HOGENOM" id="CLU_019796_4_0_6"/>
<dbReference type="OrthoDB" id="9770208at2"/>
<dbReference type="UniPathway" id="UPA00244">
    <property type="reaction ID" value="UER00310"/>
</dbReference>
<dbReference type="Proteomes" id="UP000007966">
    <property type="component" value="Chromosome"/>
</dbReference>
<dbReference type="GO" id="GO:0005829">
    <property type="term" value="C:cytosol"/>
    <property type="evidence" value="ECO:0007669"/>
    <property type="project" value="TreeGrafter"/>
</dbReference>
<dbReference type="GO" id="GO:0033711">
    <property type="term" value="F:4-phosphoerythronate dehydrogenase activity"/>
    <property type="evidence" value="ECO:0007669"/>
    <property type="project" value="UniProtKB-EC"/>
</dbReference>
<dbReference type="GO" id="GO:0051287">
    <property type="term" value="F:NAD binding"/>
    <property type="evidence" value="ECO:0007669"/>
    <property type="project" value="InterPro"/>
</dbReference>
<dbReference type="GO" id="GO:0046983">
    <property type="term" value="F:protein dimerization activity"/>
    <property type="evidence" value="ECO:0007669"/>
    <property type="project" value="InterPro"/>
</dbReference>
<dbReference type="GO" id="GO:0036001">
    <property type="term" value="P:'de novo' pyridoxal 5'-phosphate biosynthetic process"/>
    <property type="evidence" value="ECO:0007669"/>
    <property type="project" value="TreeGrafter"/>
</dbReference>
<dbReference type="GO" id="GO:0008615">
    <property type="term" value="P:pyridoxine biosynthetic process"/>
    <property type="evidence" value="ECO:0007669"/>
    <property type="project" value="UniProtKB-UniRule"/>
</dbReference>
<dbReference type="CDD" id="cd12158">
    <property type="entry name" value="ErythrP_dh"/>
    <property type="match status" value="1"/>
</dbReference>
<dbReference type="FunFam" id="3.40.50.720:FF:000093">
    <property type="entry name" value="Erythronate-4-phosphate dehydrogenase"/>
    <property type="match status" value="1"/>
</dbReference>
<dbReference type="Gene3D" id="3.30.1370.170">
    <property type="match status" value="1"/>
</dbReference>
<dbReference type="Gene3D" id="3.40.50.720">
    <property type="entry name" value="NAD(P)-binding Rossmann-like Domain"/>
    <property type="match status" value="2"/>
</dbReference>
<dbReference type="HAMAP" id="MF_01825">
    <property type="entry name" value="PdxB"/>
    <property type="match status" value="1"/>
</dbReference>
<dbReference type="InterPro" id="IPR006139">
    <property type="entry name" value="D-isomer_2_OHA_DH_cat_dom"/>
</dbReference>
<dbReference type="InterPro" id="IPR029753">
    <property type="entry name" value="D-isomer_DH_CS"/>
</dbReference>
<dbReference type="InterPro" id="IPR029752">
    <property type="entry name" value="D-isomer_DH_CS1"/>
</dbReference>
<dbReference type="InterPro" id="IPR006140">
    <property type="entry name" value="D-isomer_DH_NAD-bd"/>
</dbReference>
<dbReference type="InterPro" id="IPR020921">
    <property type="entry name" value="Erythronate-4-P_DHase"/>
</dbReference>
<dbReference type="InterPro" id="IPR024531">
    <property type="entry name" value="Erythronate-4-P_DHase_dimer"/>
</dbReference>
<dbReference type="InterPro" id="IPR036291">
    <property type="entry name" value="NAD(P)-bd_dom_sf"/>
</dbReference>
<dbReference type="InterPro" id="IPR038251">
    <property type="entry name" value="PdxB_dimer_sf"/>
</dbReference>
<dbReference type="NCBIfam" id="NF001309">
    <property type="entry name" value="PRK00257.1"/>
    <property type="match status" value="1"/>
</dbReference>
<dbReference type="PANTHER" id="PTHR42938">
    <property type="entry name" value="FORMATE DEHYDROGENASE 1"/>
    <property type="match status" value="1"/>
</dbReference>
<dbReference type="PANTHER" id="PTHR42938:SF9">
    <property type="entry name" value="FORMATE DEHYDROGENASE 1"/>
    <property type="match status" value="1"/>
</dbReference>
<dbReference type="Pfam" id="PF00389">
    <property type="entry name" value="2-Hacid_dh"/>
    <property type="match status" value="1"/>
</dbReference>
<dbReference type="Pfam" id="PF02826">
    <property type="entry name" value="2-Hacid_dh_C"/>
    <property type="match status" value="1"/>
</dbReference>
<dbReference type="Pfam" id="PF11890">
    <property type="entry name" value="DUF3410"/>
    <property type="match status" value="1"/>
</dbReference>
<dbReference type="SUPFAM" id="SSF52283">
    <property type="entry name" value="Formate/glycerate dehydrogenase catalytic domain-like"/>
    <property type="match status" value="1"/>
</dbReference>
<dbReference type="SUPFAM" id="SSF51735">
    <property type="entry name" value="NAD(P)-binding Rossmann-fold domains"/>
    <property type="match status" value="1"/>
</dbReference>
<dbReference type="PROSITE" id="PS00065">
    <property type="entry name" value="D_2_HYDROXYACID_DH_1"/>
    <property type="match status" value="1"/>
</dbReference>
<dbReference type="PROSITE" id="PS00671">
    <property type="entry name" value="D_2_HYDROXYACID_DH_3"/>
    <property type="match status" value="1"/>
</dbReference>
<comment type="function">
    <text evidence="1">Catalyzes the oxidation of erythronate-4-phosphate to 3-hydroxy-2-oxo-4-phosphonooxybutanoate.</text>
</comment>
<comment type="catalytic activity">
    <reaction evidence="1">
        <text>4-phospho-D-erythronate + NAD(+) = (R)-3-hydroxy-2-oxo-4-phosphooxybutanoate + NADH + H(+)</text>
        <dbReference type="Rhea" id="RHEA:18829"/>
        <dbReference type="ChEBI" id="CHEBI:15378"/>
        <dbReference type="ChEBI" id="CHEBI:57540"/>
        <dbReference type="ChEBI" id="CHEBI:57945"/>
        <dbReference type="ChEBI" id="CHEBI:58538"/>
        <dbReference type="ChEBI" id="CHEBI:58766"/>
        <dbReference type="EC" id="1.1.1.290"/>
    </reaction>
</comment>
<comment type="pathway">
    <text evidence="1">Cofactor biosynthesis; pyridoxine 5'-phosphate biosynthesis; pyridoxine 5'-phosphate from D-erythrose 4-phosphate: step 2/5.</text>
</comment>
<comment type="subunit">
    <text evidence="1">Homodimer.</text>
</comment>
<comment type="subcellular location">
    <subcellularLocation>
        <location evidence="1">Cytoplasm</location>
    </subcellularLocation>
</comment>
<comment type="similarity">
    <text evidence="1">Belongs to the D-isomer specific 2-hydroxyacid dehydrogenase family. PdxB subfamily.</text>
</comment>
<organism>
    <name type="scientific">Pectobacterium atrosepticum (strain SCRI 1043 / ATCC BAA-672)</name>
    <name type="common">Erwinia carotovora subsp. atroseptica</name>
    <dbReference type="NCBI Taxonomy" id="218491"/>
    <lineage>
        <taxon>Bacteria</taxon>
        <taxon>Pseudomonadati</taxon>
        <taxon>Pseudomonadota</taxon>
        <taxon>Gammaproteobacteria</taxon>
        <taxon>Enterobacterales</taxon>
        <taxon>Pectobacteriaceae</taxon>
        <taxon>Pectobacterium</taxon>
    </lineage>
</organism>
<sequence>MKILVDENMPYARELFSRLGEVQAVPGRPLPRELLVGADALMVRSVTKVNANLLFGSSVKFVGSATAGTDHVDDTWLNANGIAFSAAPGCNAIAVVEYVFSSLLMLAERDGFQLRDKTVGIVGVGNVGRRLDTRLKAWGVKTLLCDPPRADRGDAGDFLSLETLVRDADILTLHTPLYLDGPYRTHHLVDATVLNAFADGRILINACRGPVVDNAALLEALQQGKKLSVILDVWEPEPGLSTDLLARVDIGTAHIAGYTLEGKARGTTQVFEAWSEFIGTPQQIALSSLLPEPDYAEVTLTAPVDEALLKRLVHLVYDVRRDDALLRHAAHQEGEFDRLRKHYQERREWSSLHVICADVESADCLNALGFNASVRGAR</sequence>
<keyword id="KW-0963">Cytoplasm</keyword>
<keyword id="KW-0520">NAD</keyword>
<keyword id="KW-0560">Oxidoreductase</keyword>
<keyword id="KW-0664">Pyridoxine biosynthesis</keyword>
<keyword id="KW-1185">Reference proteome</keyword>
<feature type="chain" id="PRO_0000075978" description="Erythronate-4-phosphate dehydrogenase">
    <location>
        <begin position="1"/>
        <end position="378"/>
    </location>
</feature>
<feature type="active site" evidence="1">
    <location>
        <position position="208"/>
    </location>
</feature>
<feature type="active site" evidence="1">
    <location>
        <position position="237"/>
    </location>
</feature>
<feature type="active site" description="Proton donor" evidence="1">
    <location>
        <position position="254"/>
    </location>
</feature>
<feature type="binding site" evidence="1">
    <location>
        <position position="45"/>
    </location>
    <ligand>
        <name>substrate</name>
    </ligand>
</feature>
<feature type="binding site" evidence="1">
    <location>
        <position position="66"/>
    </location>
    <ligand>
        <name>substrate</name>
    </ligand>
</feature>
<feature type="binding site" evidence="1">
    <location>
        <position position="146"/>
    </location>
    <ligand>
        <name>NAD(+)</name>
        <dbReference type="ChEBI" id="CHEBI:57540"/>
    </ligand>
</feature>
<feature type="binding site" evidence="1">
    <location>
        <position position="175"/>
    </location>
    <ligand>
        <name>NAD(+)</name>
        <dbReference type="ChEBI" id="CHEBI:57540"/>
    </ligand>
</feature>
<feature type="binding site" evidence="1">
    <location>
        <position position="232"/>
    </location>
    <ligand>
        <name>NAD(+)</name>
        <dbReference type="ChEBI" id="CHEBI:57540"/>
    </ligand>
</feature>
<feature type="binding site" evidence="1">
    <location>
        <position position="257"/>
    </location>
    <ligand>
        <name>NAD(+)</name>
        <dbReference type="ChEBI" id="CHEBI:57540"/>
    </ligand>
</feature>
<feature type="binding site" evidence="1">
    <location>
        <position position="258"/>
    </location>
    <ligand>
        <name>substrate</name>
    </ligand>
</feature>
<name>PDXB_PECAS</name>
<reference key="1">
    <citation type="journal article" date="2004" name="Proc. Natl. Acad. Sci. U.S.A.">
        <title>Genome sequence of the enterobacterial phytopathogen Erwinia carotovora subsp. atroseptica and characterization of virulence factors.</title>
        <authorList>
            <person name="Bell K.S."/>
            <person name="Sebaihia M."/>
            <person name="Pritchard L."/>
            <person name="Holden M.T.G."/>
            <person name="Hyman L.J."/>
            <person name="Holeva M.C."/>
            <person name="Thomson N.R."/>
            <person name="Bentley S.D."/>
            <person name="Churcher L.J.C."/>
            <person name="Mungall K."/>
            <person name="Atkin R."/>
            <person name="Bason N."/>
            <person name="Brooks K."/>
            <person name="Chillingworth T."/>
            <person name="Clark K."/>
            <person name="Doggett J."/>
            <person name="Fraser A."/>
            <person name="Hance Z."/>
            <person name="Hauser H."/>
            <person name="Jagels K."/>
            <person name="Moule S."/>
            <person name="Norbertczak H."/>
            <person name="Ormond D."/>
            <person name="Price C."/>
            <person name="Quail M.A."/>
            <person name="Sanders M."/>
            <person name="Walker D."/>
            <person name="Whitehead S."/>
            <person name="Salmond G.P.C."/>
            <person name="Birch P.R.J."/>
            <person name="Parkhill J."/>
            <person name="Toth I.K."/>
        </authorList>
    </citation>
    <scope>NUCLEOTIDE SEQUENCE [LARGE SCALE GENOMIC DNA]</scope>
    <source>
        <strain>SCRI 1043 / ATCC BAA-672</strain>
    </source>
</reference>